<comment type="function">
    <text evidence="1">Required for spindle microtubule attachment to both kinetochores and centrosomes. Also functions to tether minus-ends of spindle microtubules to centrosomes. May act by forming ring-like structures around microtubules, or by serving as a cross-linker or scaffold at the attachment site (By similarity).</text>
</comment>
<comment type="subunit">
    <text evidence="1">Interacts with clip1, mis12, ndc80 and zwint. Interacts with gamma-tubulin (By similarity).</text>
</comment>
<comment type="subcellular location">
    <subcellularLocation>
        <location evidence="1">Cytoplasm</location>
        <location evidence="1">Cytoskeleton</location>
        <location evidence="1">Microtubule organizing center</location>
        <location evidence="1">Centrosome</location>
    </subcellularLocation>
    <subcellularLocation>
        <location evidence="1">Chromosome</location>
        <location evidence="1">Centromere</location>
        <location evidence="1">Kinetochore</location>
    </subcellularLocation>
    <subcellularLocation>
        <location evidence="1">Cytoplasm</location>
        <location evidence="1">Cytoskeleton</location>
        <location evidence="1">Spindle</location>
    </subcellularLocation>
    <text evidence="1">Localizes to spindle microtubules.</text>
</comment>
<comment type="alternative products">
    <event type="alternative splicing"/>
    <isoform>
        <id>Q28BZ7-1</id>
        <name>1</name>
        <sequence type="displayed"/>
    </isoform>
    <isoform>
        <id>Q28BZ7-2</id>
        <name>2</name>
        <sequence type="described" ref="VSP_037848"/>
    </isoform>
</comment>
<comment type="similarity">
    <text evidence="5">Belongs to the translokin family.</text>
</comment>
<comment type="sequence caution" evidence="5">
    <conflict type="miscellaneous discrepancy">
        <sequence resource="EMBL-CDS" id="AAI18771"/>
    </conflict>
    <text>Contaminating sequence. Potential poly-A sequence.</text>
</comment>
<comment type="sequence caution" evidence="5">
    <conflict type="miscellaneous discrepancy">
        <sequence resource="EMBL-CDS" id="AAI57234"/>
    </conflict>
    <text>Contaminating sequence. Potential poly-A sequence.</text>
</comment>
<dbReference type="EMBL" id="CR942538">
    <property type="protein sequence ID" value="CAJ82055.1"/>
    <property type="molecule type" value="mRNA"/>
</dbReference>
<dbReference type="EMBL" id="BC118770">
    <property type="protein sequence ID" value="AAI18771.1"/>
    <property type="status" value="ALT_SEQ"/>
    <property type="molecule type" value="mRNA"/>
</dbReference>
<dbReference type="EMBL" id="BC157233">
    <property type="protein sequence ID" value="AAI57234.1"/>
    <property type="status" value="ALT_SEQ"/>
    <property type="molecule type" value="mRNA"/>
</dbReference>
<dbReference type="RefSeq" id="NP_001039145.1">
    <molecule id="Q28BZ7-1"/>
    <property type="nucleotide sequence ID" value="NM_001045680.1"/>
</dbReference>
<dbReference type="SMR" id="Q28BZ7"/>
<dbReference type="FunCoup" id="Q28BZ7">
    <property type="interactions" value="176"/>
</dbReference>
<dbReference type="STRING" id="8364.ENSXETP00000012868"/>
<dbReference type="PaxDb" id="8364-ENSXETP00000046041"/>
<dbReference type="GeneID" id="733970"/>
<dbReference type="KEGG" id="xtr:733970"/>
<dbReference type="AGR" id="Xenbase:XB-GENE-5897356"/>
<dbReference type="CTD" id="285753"/>
<dbReference type="Xenbase" id="XB-GENE-5897356">
    <property type="gene designation" value="cep57l1"/>
</dbReference>
<dbReference type="eggNOG" id="ENOG502QTVF">
    <property type="taxonomic scope" value="Eukaryota"/>
</dbReference>
<dbReference type="InParanoid" id="Q28BZ7"/>
<dbReference type="OMA" id="LQTMQHY"/>
<dbReference type="OrthoDB" id="76453at2759"/>
<dbReference type="Proteomes" id="UP000008143">
    <property type="component" value="Chromosome 5"/>
</dbReference>
<dbReference type="GO" id="GO:0005813">
    <property type="term" value="C:centrosome"/>
    <property type="evidence" value="ECO:0007669"/>
    <property type="project" value="UniProtKB-SubCell"/>
</dbReference>
<dbReference type="GO" id="GO:0005737">
    <property type="term" value="C:cytoplasm"/>
    <property type="evidence" value="ECO:0007669"/>
    <property type="project" value="UniProtKB-KW"/>
</dbReference>
<dbReference type="GO" id="GO:0000776">
    <property type="term" value="C:kinetochore"/>
    <property type="evidence" value="ECO:0007669"/>
    <property type="project" value="UniProtKB-KW"/>
</dbReference>
<dbReference type="GO" id="GO:0005874">
    <property type="term" value="C:microtubule"/>
    <property type="evidence" value="ECO:0007669"/>
    <property type="project" value="UniProtKB-KW"/>
</dbReference>
<dbReference type="GO" id="GO:0005819">
    <property type="term" value="C:spindle"/>
    <property type="evidence" value="ECO:0007669"/>
    <property type="project" value="UniProtKB-SubCell"/>
</dbReference>
<dbReference type="GO" id="GO:0043015">
    <property type="term" value="F:gamma-tubulin binding"/>
    <property type="evidence" value="ECO:0007669"/>
    <property type="project" value="InterPro"/>
</dbReference>
<dbReference type="GO" id="GO:0042802">
    <property type="term" value="F:identical protein binding"/>
    <property type="evidence" value="ECO:0007669"/>
    <property type="project" value="InterPro"/>
</dbReference>
<dbReference type="GO" id="GO:0008017">
    <property type="term" value="F:microtubule binding"/>
    <property type="evidence" value="ECO:0007669"/>
    <property type="project" value="InterPro"/>
</dbReference>
<dbReference type="FunFam" id="1.20.58.90:FF:000003">
    <property type="entry name" value="Centrosomal protein of 57 kDa"/>
    <property type="match status" value="1"/>
</dbReference>
<dbReference type="Gene3D" id="1.20.58.90">
    <property type="match status" value="1"/>
</dbReference>
<dbReference type="InterPro" id="IPR051756">
    <property type="entry name" value="Centrosomal_MT-associated"/>
</dbReference>
<dbReference type="InterPro" id="IPR025913">
    <property type="entry name" value="Cep57_CLD"/>
</dbReference>
<dbReference type="InterPro" id="IPR024957">
    <property type="entry name" value="Cep57_MT-bd_dom"/>
</dbReference>
<dbReference type="PANTHER" id="PTHR19336:SF10">
    <property type="entry name" value="CENTROSOMAL PROTEIN CEP57L1"/>
    <property type="match status" value="1"/>
</dbReference>
<dbReference type="PANTHER" id="PTHR19336">
    <property type="entry name" value="UNCHARACTERIZED DUF1167"/>
    <property type="match status" value="1"/>
</dbReference>
<dbReference type="Pfam" id="PF14073">
    <property type="entry name" value="Cep57_CLD"/>
    <property type="match status" value="1"/>
</dbReference>
<dbReference type="Pfam" id="PF06657">
    <property type="entry name" value="Cep57_MT_bd"/>
    <property type="match status" value="1"/>
</dbReference>
<evidence type="ECO:0000250" key="1"/>
<evidence type="ECO:0000255" key="2"/>
<evidence type="ECO:0000256" key="3">
    <source>
        <dbReference type="SAM" id="MobiDB-lite"/>
    </source>
</evidence>
<evidence type="ECO:0000303" key="4">
    <source ref="2"/>
</evidence>
<evidence type="ECO:0000305" key="5"/>
<keyword id="KW-0025">Alternative splicing</keyword>
<keyword id="KW-0137">Centromere</keyword>
<keyword id="KW-0158">Chromosome</keyword>
<keyword id="KW-0175">Coiled coil</keyword>
<keyword id="KW-0963">Cytoplasm</keyword>
<keyword id="KW-0206">Cytoskeleton</keyword>
<keyword id="KW-0995">Kinetochore</keyword>
<keyword id="KW-0493">Microtubule</keyword>
<keyword id="KW-1185">Reference proteome</keyword>
<proteinExistence type="evidence at transcript level"/>
<name>CE57L_XENTR</name>
<feature type="chain" id="PRO_0000381819" description="Centrosomal protein cep57l1">
    <location>
        <begin position="1"/>
        <end position="483"/>
    </location>
</feature>
<feature type="region of interest" description="Disordered" evidence="3">
    <location>
        <begin position="237"/>
        <end position="261"/>
    </location>
</feature>
<feature type="region of interest" description="Disordered" evidence="3">
    <location>
        <begin position="303"/>
        <end position="325"/>
    </location>
</feature>
<feature type="region of interest" description="Disordered" evidence="3">
    <location>
        <begin position="416"/>
        <end position="460"/>
    </location>
</feature>
<feature type="coiled-coil region" evidence="2">
    <location>
        <begin position="94"/>
        <end position="228"/>
    </location>
</feature>
<feature type="coiled-coil region" evidence="2">
    <location>
        <begin position="375"/>
        <end position="418"/>
    </location>
</feature>
<feature type="compositionally biased region" description="Basic residues" evidence="3">
    <location>
        <begin position="243"/>
        <end position="252"/>
    </location>
</feature>
<feature type="compositionally biased region" description="Polar residues" evidence="3">
    <location>
        <begin position="420"/>
        <end position="435"/>
    </location>
</feature>
<feature type="splice variant" id="VSP_037848" description="In isoform 2." evidence="4">
    <location>
        <begin position="160"/>
        <end position="194"/>
    </location>
</feature>
<organism>
    <name type="scientific">Xenopus tropicalis</name>
    <name type="common">Western clawed frog</name>
    <name type="synonym">Silurana tropicalis</name>
    <dbReference type="NCBI Taxonomy" id="8364"/>
    <lineage>
        <taxon>Eukaryota</taxon>
        <taxon>Metazoa</taxon>
        <taxon>Chordata</taxon>
        <taxon>Craniata</taxon>
        <taxon>Vertebrata</taxon>
        <taxon>Euteleostomi</taxon>
        <taxon>Amphibia</taxon>
        <taxon>Batrachia</taxon>
        <taxon>Anura</taxon>
        <taxon>Pipoidea</taxon>
        <taxon>Pipidae</taxon>
        <taxon>Xenopodinae</taxon>
        <taxon>Xenopus</taxon>
        <taxon>Silurana</taxon>
    </lineage>
</organism>
<reference key="1">
    <citation type="submission" date="2006-10" db="EMBL/GenBank/DDBJ databases">
        <authorList>
            <consortium name="Sanger Xenopus tropicalis EST/cDNA project"/>
        </authorList>
    </citation>
    <scope>NUCLEOTIDE SEQUENCE [LARGE SCALE MRNA] (ISOFORM 1)</scope>
    <source>
        <tissue>Egg</tissue>
    </source>
</reference>
<reference key="2">
    <citation type="submission" date="2006-07" db="EMBL/GenBank/DDBJ databases">
        <authorList>
            <consortium name="NIH - Xenopus Gene Collection (XGC) project"/>
        </authorList>
    </citation>
    <scope>NUCLEOTIDE SEQUENCE [LARGE SCALE MRNA] OF 1-397 (ISOFORM 1)</scope>
    <scope>NUCLEOTIDE SEQUENCE [LARGE SCALE MRNA] OF 1-399 (ISOFORM 2)</scope>
    <source>
        <strain>N6</strain>
        <tissue>Liver</tissue>
        <tissue>Testis</tissue>
    </source>
</reference>
<gene>
    <name type="primary">cep57l1</name>
    <name type="synonym">cep57</name>
    <name type="synonym">cep57r</name>
    <name type="ORF">TEgg135a06.1</name>
</gene>
<sequence length="483" mass="54747">MESLSKESYLSSFHQFPSYAPLPDHIKFESVSSKKIQCSALENISPHQYDILQAPNSRALISALKTLQEKICRLELEKTHARDRLTNLTRVAGEHKKVLESEKQSAELAAKEATNQQNDIGKQLNNAKQRCSLLEKQLDYMKEMMENADTQKTTIHEHQMLTQKEQKEIQSKLKKLEVLEKMCTRLSATHKSAETKIQHLEEKLSVEEQNRKALQDKAAQVQTSLEVNRILLSSASAQNSTQRKVKKKKQSKLKNSVSKEPPSKCFYPKAGELPFVAGKSTTSSHSLSANVQNVLHMMKHHSPQVSQKNPKTAEHKPSVLPGGSRTIPTRLISSFTGDNLSDILLALQDELGQMSFEHQELLRHINETKNTDMREDLERELDYVVKQMEIKSDQIMKLKRHQLNVNKLKKTAKLLKEQPRPTSVTKLAADKQNTGAKDPSTPRRKGDLADGSGTPNSKASLELLKSVRKIQMTLKKDDIMWEK</sequence>
<protein>
    <recommendedName>
        <fullName>Centrosomal protein cep57l1</fullName>
    </recommendedName>
    <alternativeName>
        <fullName>Centrosomal protein 57kDa-like protein 1</fullName>
    </alternativeName>
    <alternativeName>
        <fullName>Centrosomal protein of 57 kDa</fullName>
        <shortName>Cep57</shortName>
    </alternativeName>
    <alternativeName>
        <fullName>Cep57-related protein</fullName>
        <shortName>Cep57R</shortName>
    </alternativeName>
</protein>
<accession>Q28BZ7</accession>
<accession>A9ULF2</accession>
<accession>Q0VFM8</accession>